<reference evidence="7" key="1">
    <citation type="journal article" date="2007" name="Nature">
        <title>Evolution of genes and genomes on the Drosophila phylogeny.</title>
        <authorList>
            <consortium name="Drosophila 12 genomes consortium"/>
        </authorList>
    </citation>
    <scope>NUCLEOTIDE SEQUENCE [LARGE SCALE GENOMIC DNA]</scope>
    <source>
        <strain evidence="7">Tucson 14024-0371.13</strain>
    </source>
</reference>
<protein>
    <recommendedName>
        <fullName evidence="2">Insulin receptor substrate 1</fullName>
    </recommendedName>
    <alternativeName>
        <fullName evidence="2">Protein chico</fullName>
    </alternativeName>
</protein>
<accession>B3MPN6</accession>
<sequence length="940" mass="105564">MASISDDGMVLSGYHKKLKTMKKKFFVLYEETSINQARLEYYDTEKKFLQRAEPKRVIYLKDCFNINRRLDTKHRFVIVLSSREGGFGIVLESENDLRKWLDKLLLLQRNIANVNGQVYSAYEHVWQVIIQKKGMSEKVGITGTYHCCLSAKSLTFVCIGPEKTANGDDRISSIEILLTTIRRCGHASPQCIFYMELGRQSVLGSGELWMETDNAAIATNMHNTILSAMSAKTDSNTNLINVYQARPDISHEPMRKRSSSANEASKPINVIQNRQNSLELRNCSSPHNYGFPRERCDSLPTRNGTLSESSNQSYFGSNLGLRSNTISGIRPHSTSKHSNSPTFNMPLRCSESEDSSISIDESDDNASFGHYRLNTRSSKGAIPEENLDDFASAEYCKGSGPSGDDNYIPMTPIKPASFCEPDKVELPKPDDPNLHINFPEHTSEKLENDFDLDSDNQCGRPIRAYSIGNKVEHLKLNRRLGYLNDTGQNSNRVRAYSVGSKSKIPRCDLQRVVLVEDNRFDTNRSQNNISKEGPISGTSTNREKKSTSAPLLSLKNQINQDRMSDLMEIDFSQSSKIEPWTPAQFKRNVMDVVPKNIESVFPKSYRNDSSNLTLHATSQKDIFNGGKLNTTESSSEGGYLEMKPVGNAFSSSPVTLPSKIEKLKLKDNTELPVHELHKVSSYNIPPEKRKEQTPTQTRIEEKTLNSQLNEKLINTESANVVANITPNVPELKSDKKNNVESLIIENNNWDLGTTDEKKLVHSISSEDYTQIKDKLNDLTKNNEVGYKILQIKSDSSLISSKITLKNRLRDNLERQQRLTESVNTIPDKSPSATTKGTFYSLGNNFQTPPNNVVNNTLDNILQTKDLNFPSRPSSQASQPELHYAKLDLPNCSDQNPAKYLKRGSRESPPVATCAEDGNTYARIDFDQSDSSSSSSKIFNM</sequence>
<dbReference type="EMBL" id="CH902620">
    <property type="protein sequence ID" value="EDV32284.1"/>
    <property type="molecule type" value="Genomic_DNA"/>
</dbReference>
<dbReference type="SMR" id="B3MPN6"/>
<dbReference type="FunCoup" id="B3MPN6">
    <property type="interactions" value="352"/>
</dbReference>
<dbReference type="STRING" id="7217.B3MPN6"/>
<dbReference type="EnsemblMetazoa" id="FBtr0118827">
    <property type="protein sequence ID" value="FBpp0117319"/>
    <property type="gene ID" value="FBgn0091154"/>
</dbReference>
<dbReference type="EnsemblMetazoa" id="XM_001963027.4">
    <property type="protein sequence ID" value="XP_001963063.1"/>
    <property type="gene ID" value="LOC6496955"/>
</dbReference>
<dbReference type="EnsemblMetazoa" id="XM_032455096.2">
    <property type="protein sequence ID" value="XP_032310987.1"/>
    <property type="gene ID" value="LOC6496955"/>
</dbReference>
<dbReference type="EnsemblMetazoa" id="XM_032455097.2">
    <property type="protein sequence ID" value="XP_032310988.1"/>
    <property type="gene ID" value="LOC6496955"/>
</dbReference>
<dbReference type="GeneID" id="6496955"/>
<dbReference type="KEGG" id="dan:6496955"/>
<dbReference type="CTD" id="30067"/>
<dbReference type="eggNOG" id="ENOG502QUNU">
    <property type="taxonomic scope" value="Eukaryota"/>
</dbReference>
<dbReference type="HOGENOM" id="CLU_012544_0_0_1"/>
<dbReference type="InParanoid" id="B3MPN6"/>
<dbReference type="OMA" id="RNCSSPH"/>
<dbReference type="OrthoDB" id="946068at2759"/>
<dbReference type="PhylomeDB" id="B3MPN6"/>
<dbReference type="ChiTaRS" id="chico">
    <property type="organism name" value="fly"/>
</dbReference>
<dbReference type="Proteomes" id="UP000007801">
    <property type="component" value="Unassembled WGS sequence"/>
</dbReference>
<dbReference type="GO" id="GO:0005938">
    <property type="term" value="C:cell cortex"/>
    <property type="evidence" value="ECO:0007669"/>
    <property type="project" value="EnsemblMetazoa"/>
</dbReference>
<dbReference type="GO" id="GO:0005737">
    <property type="term" value="C:cytoplasm"/>
    <property type="evidence" value="ECO:0000250"/>
    <property type="project" value="UniProtKB"/>
</dbReference>
<dbReference type="GO" id="GO:0005829">
    <property type="term" value="C:cytosol"/>
    <property type="evidence" value="ECO:0007669"/>
    <property type="project" value="EnsemblMetazoa"/>
</dbReference>
<dbReference type="GO" id="GO:0043231">
    <property type="term" value="C:intracellular membrane-bounded organelle"/>
    <property type="evidence" value="ECO:0000250"/>
    <property type="project" value="UniProtKB"/>
</dbReference>
<dbReference type="GO" id="GO:0005634">
    <property type="term" value="C:nucleus"/>
    <property type="evidence" value="ECO:0000250"/>
    <property type="project" value="UniProtKB"/>
</dbReference>
<dbReference type="GO" id="GO:0005886">
    <property type="term" value="C:plasma membrane"/>
    <property type="evidence" value="ECO:0007669"/>
    <property type="project" value="TreeGrafter"/>
</dbReference>
<dbReference type="GO" id="GO:0005158">
    <property type="term" value="F:insulin receptor binding"/>
    <property type="evidence" value="ECO:0000250"/>
    <property type="project" value="UniProtKB"/>
</dbReference>
<dbReference type="GO" id="GO:0005159">
    <property type="term" value="F:insulin-like growth factor receptor binding"/>
    <property type="evidence" value="ECO:0000250"/>
    <property type="project" value="UniProtKB"/>
</dbReference>
<dbReference type="GO" id="GO:0043548">
    <property type="term" value="F:phosphatidylinositol 3-kinase binding"/>
    <property type="evidence" value="ECO:0007669"/>
    <property type="project" value="TreeGrafter"/>
</dbReference>
<dbReference type="GO" id="GO:0009267">
    <property type="term" value="P:cellular response to starvation"/>
    <property type="evidence" value="ECO:0007669"/>
    <property type="project" value="EnsemblMetazoa"/>
</dbReference>
<dbReference type="GO" id="GO:0008340">
    <property type="term" value="P:determination of adult lifespan"/>
    <property type="evidence" value="ECO:0007669"/>
    <property type="project" value="EnsemblMetazoa"/>
</dbReference>
<dbReference type="GO" id="GO:0060250">
    <property type="term" value="P:germ-line stem-cell niche homeostasis"/>
    <property type="evidence" value="ECO:0007669"/>
    <property type="project" value="EnsemblMetazoa"/>
</dbReference>
<dbReference type="GO" id="GO:0042593">
    <property type="term" value="P:glucose homeostasis"/>
    <property type="evidence" value="ECO:0007669"/>
    <property type="project" value="EnsemblMetazoa"/>
</dbReference>
<dbReference type="GO" id="GO:0007295">
    <property type="term" value="P:growth of a germarium-derived egg chamber"/>
    <property type="evidence" value="ECO:0007669"/>
    <property type="project" value="EnsemblMetazoa"/>
</dbReference>
<dbReference type="GO" id="GO:0008286">
    <property type="term" value="P:insulin receptor signaling pathway"/>
    <property type="evidence" value="ECO:0000250"/>
    <property type="project" value="UniProtKB"/>
</dbReference>
<dbReference type="GO" id="GO:0048009">
    <property type="term" value="P:insulin-like growth factor receptor signaling pathway"/>
    <property type="evidence" value="ECO:0000250"/>
    <property type="project" value="UniProtKB"/>
</dbReference>
<dbReference type="GO" id="GO:0055088">
    <property type="term" value="P:lipid homeostasis"/>
    <property type="evidence" value="ECO:0007669"/>
    <property type="project" value="EnsemblMetazoa"/>
</dbReference>
<dbReference type="GO" id="GO:0060291">
    <property type="term" value="P:long-term synaptic potentiation"/>
    <property type="evidence" value="ECO:0007669"/>
    <property type="project" value="EnsemblMetazoa"/>
</dbReference>
<dbReference type="GO" id="GO:0048133">
    <property type="term" value="P:male germ-line stem cell asymmetric division"/>
    <property type="evidence" value="ECO:0007669"/>
    <property type="project" value="EnsemblMetazoa"/>
</dbReference>
<dbReference type="GO" id="GO:0035264">
    <property type="term" value="P:multicellular organism growth"/>
    <property type="evidence" value="ECO:0007669"/>
    <property type="project" value="EnsemblMetazoa"/>
</dbReference>
<dbReference type="GO" id="GO:0061964">
    <property type="term" value="P:negative regulation of entry into reproductive diapause"/>
    <property type="evidence" value="ECO:0007669"/>
    <property type="project" value="EnsemblMetazoa"/>
</dbReference>
<dbReference type="GO" id="GO:0010897">
    <property type="term" value="P:negative regulation of triglyceride catabolic process"/>
    <property type="evidence" value="ECO:0007669"/>
    <property type="project" value="EnsemblMetazoa"/>
</dbReference>
<dbReference type="GO" id="GO:0008355">
    <property type="term" value="P:olfactory learning"/>
    <property type="evidence" value="ECO:0007669"/>
    <property type="project" value="EnsemblMetazoa"/>
</dbReference>
<dbReference type="GO" id="GO:1903688">
    <property type="term" value="P:positive regulation of border follicle cell migration"/>
    <property type="evidence" value="ECO:0007669"/>
    <property type="project" value="EnsemblMetazoa"/>
</dbReference>
<dbReference type="GO" id="GO:0008284">
    <property type="term" value="P:positive regulation of cell population proliferation"/>
    <property type="evidence" value="ECO:0007669"/>
    <property type="project" value="EnsemblMetazoa"/>
</dbReference>
<dbReference type="GO" id="GO:0045793">
    <property type="term" value="P:positive regulation of cell size"/>
    <property type="evidence" value="ECO:0007669"/>
    <property type="project" value="EnsemblMetazoa"/>
</dbReference>
<dbReference type="GO" id="GO:0050778">
    <property type="term" value="P:positive regulation of immune response"/>
    <property type="evidence" value="ECO:0007669"/>
    <property type="project" value="EnsemblMetazoa"/>
</dbReference>
<dbReference type="GO" id="GO:0040018">
    <property type="term" value="P:positive regulation of multicellular organism growth"/>
    <property type="evidence" value="ECO:0007669"/>
    <property type="project" value="EnsemblMetazoa"/>
</dbReference>
<dbReference type="GO" id="GO:0046622">
    <property type="term" value="P:positive regulation of organ growth"/>
    <property type="evidence" value="ECO:0007669"/>
    <property type="project" value="EnsemblMetazoa"/>
</dbReference>
<dbReference type="GO" id="GO:0051897">
    <property type="term" value="P:positive regulation of phosphatidylinositol 3-kinase/protein kinase B signal transduction"/>
    <property type="evidence" value="ECO:0007669"/>
    <property type="project" value="EnsemblMetazoa"/>
</dbReference>
<dbReference type="GO" id="GO:0007285">
    <property type="term" value="P:primary spermatocyte growth"/>
    <property type="evidence" value="ECO:0007669"/>
    <property type="project" value="EnsemblMetazoa"/>
</dbReference>
<dbReference type="GO" id="GO:0035159">
    <property type="term" value="P:regulation of tube length, open tracheal system"/>
    <property type="evidence" value="ECO:0007669"/>
    <property type="project" value="EnsemblMetazoa"/>
</dbReference>
<dbReference type="GO" id="GO:0034059">
    <property type="term" value="P:response to anoxia"/>
    <property type="evidence" value="ECO:0007669"/>
    <property type="project" value="EnsemblMetazoa"/>
</dbReference>
<dbReference type="GO" id="GO:0007296">
    <property type="term" value="P:vitellogenesis"/>
    <property type="evidence" value="ECO:0000250"/>
    <property type="project" value="UniProtKB"/>
</dbReference>
<dbReference type="CDD" id="cd01257">
    <property type="entry name" value="PH_IRS"/>
    <property type="match status" value="1"/>
</dbReference>
<dbReference type="CDD" id="cd01204">
    <property type="entry name" value="PTB_IRS"/>
    <property type="match status" value="1"/>
</dbReference>
<dbReference type="FunFam" id="2.30.29.30:FF:000441">
    <property type="entry name" value="Insulin receptor substrate 1"/>
    <property type="match status" value="1"/>
</dbReference>
<dbReference type="FunFam" id="2.30.29.30:FF:000457">
    <property type="entry name" value="Insulin receptor substrate 1"/>
    <property type="match status" value="1"/>
</dbReference>
<dbReference type="Gene3D" id="2.30.29.30">
    <property type="entry name" value="Pleckstrin-homology domain (PH domain)/Phosphotyrosine-binding domain (PTB)"/>
    <property type="match status" value="2"/>
</dbReference>
<dbReference type="InterPro" id="IPR039011">
    <property type="entry name" value="IRS"/>
</dbReference>
<dbReference type="InterPro" id="IPR002404">
    <property type="entry name" value="IRS_PTB"/>
</dbReference>
<dbReference type="InterPro" id="IPR011993">
    <property type="entry name" value="PH-like_dom_sf"/>
</dbReference>
<dbReference type="InterPro" id="IPR001849">
    <property type="entry name" value="PH_domain"/>
</dbReference>
<dbReference type="PANTHER" id="PTHR10614">
    <property type="entry name" value="INSULIN RECEPTOR SUBSTRATE"/>
    <property type="match status" value="1"/>
</dbReference>
<dbReference type="PANTHER" id="PTHR10614:SF13">
    <property type="entry name" value="INSULIN RECEPTOR SUBSTRATE 1"/>
    <property type="match status" value="1"/>
</dbReference>
<dbReference type="Pfam" id="PF02174">
    <property type="entry name" value="IRS"/>
    <property type="match status" value="1"/>
</dbReference>
<dbReference type="PRINTS" id="PR00628">
    <property type="entry name" value="INSULINRSI"/>
</dbReference>
<dbReference type="SMART" id="SM01244">
    <property type="entry name" value="IRS"/>
    <property type="match status" value="1"/>
</dbReference>
<dbReference type="SMART" id="SM00233">
    <property type="entry name" value="PH"/>
    <property type="match status" value="1"/>
</dbReference>
<dbReference type="SMART" id="SM00310">
    <property type="entry name" value="PTBI"/>
    <property type="match status" value="1"/>
</dbReference>
<dbReference type="SUPFAM" id="SSF50729">
    <property type="entry name" value="PH domain-like"/>
    <property type="match status" value="2"/>
</dbReference>
<dbReference type="PROSITE" id="PS51064">
    <property type="entry name" value="IRS_PTB"/>
    <property type="match status" value="1"/>
</dbReference>
<dbReference type="PROSITE" id="PS50003">
    <property type="entry name" value="PH_DOMAIN"/>
    <property type="match status" value="1"/>
</dbReference>
<name>IRS1_DROAN</name>
<evidence type="ECO:0000250" key="1">
    <source>
        <dbReference type="UniProtKB" id="P35570"/>
    </source>
</evidence>
<evidence type="ECO:0000250" key="2">
    <source>
        <dbReference type="UniProtKB" id="Q9XTN2"/>
    </source>
</evidence>
<evidence type="ECO:0000255" key="3"/>
<evidence type="ECO:0000255" key="4">
    <source>
        <dbReference type="PROSITE-ProRule" id="PRU00145"/>
    </source>
</evidence>
<evidence type="ECO:0000255" key="5">
    <source>
        <dbReference type="PROSITE-ProRule" id="PRU00389"/>
    </source>
</evidence>
<evidence type="ECO:0000256" key="6">
    <source>
        <dbReference type="SAM" id="MobiDB-lite"/>
    </source>
</evidence>
<evidence type="ECO:0000312" key="7">
    <source>
        <dbReference type="EMBL" id="EDV32284.1"/>
    </source>
</evidence>
<keyword id="KW-0221">Differentiation</keyword>
<keyword id="KW-0341">Growth regulation</keyword>
<keyword id="KW-0896">Oogenesis</keyword>
<keyword id="KW-0597">Phosphoprotein</keyword>
<keyword id="KW-1185">Reference proteome</keyword>
<keyword id="KW-0677">Repeat</keyword>
<gene>
    <name evidence="2" type="primary">chico</name>
    <name type="ORF">GF14127</name>
</gene>
<proteinExistence type="inferred from homology"/>
<feature type="chain" id="PRO_0000395319" description="Insulin receptor substrate 1">
    <location>
        <begin position="1"/>
        <end position="940"/>
    </location>
</feature>
<feature type="domain" description="PH" evidence="4">
    <location>
        <begin position="8"/>
        <end position="109"/>
    </location>
</feature>
<feature type="domain" description="IRS-type PTB" evidence="5">
    <location>
        <begin position="122"/>
        <end position="236"/>
    </location>
</feature>
<feature type="region of interest" description="Disordered" evidence="6">
    <location>
        <begin position="523"/>
        <end position="549"/>
    </location>
</feature>
<feature type="region of interest" description="Disordered" evidence="6">
    <location>
        <begin position="895"/>
        <end position="915"/>
    </location>
</feature>
<feature type="short sequence motif" description="YXXM motif 1" evidence="3">
    <location>
        <begin position="407"/>
        <end position="410"/>
    </location>
</feature>
<feature type="short sequence motif" description="YXXM motif 2" evidence="3">
    <location>
        <begin position="639"/>
        <end position="642"/>
    </location>
</feature>
<feature type="compositionally biased region" description="Polar residues" evidence="6">
    <location>
        <begin position="523"/>
        <end position="540"/>
    </location>
</feature>
<feature type="modified residue" description="Phosphoserine" evidence="2">
    <location>
        <position position="284"/>
    </location>
</feature>
<feature type="modified residue" description="Phosphoserine" evidence="2">
    <location>
        <position position="285"/>
    </location>
</feature>
<feature type="modified residue" description="Phosphoserine" evidence="2">
    <location>
        <position position="340"/>
    </location>
</feature>
<feature type="modified residue" description="Phosphotyrosine; by INSR" evidence="1">
    <location>
        <position position="407"/>
    </location>
</feature>
<feature type="modified residue" description="Phosphoserine" evidence="2">
    <location>
        <position position="548"/>
    </location>
</feature>
<feature type="modified residue" description="Phosphotyrosine; by INSR" evidence="1">
    <location>
        <position position="883"/>
    </location>
</feature>
<feature type="modified residue" description="Phosphoserine" evidence="2">
    <location>
        <position position="904"/>
    </location>
</feature>
<feature type="modified residue" description="Phosphoserine" evidence="2">
    <location>
        <position position="907"/>
    </location>
</feature>
<feature type="modified residue" description="Phosphotyrosine; by INSR" evidence="1">
    <location>
        <position position="920"/>
    </location>
</feature>
<organism>
    <name type="scientific">Drosophila ananassae</name>
    <name type="common">Fruit fly</name>
    <dbReference type="NCBI Taxonomy" id="7217"/>
    <lineage>
        <taxon>Eukaryota</taxon>
        <taxon>Metazoa</taxon>
        <taxon>Ecdysozoa</taxon>
        <taxon>Arthropoda</taxon>
        <taxon>Hexapoda</taxon>
        <taxon>Insecta</taxon>
        <taxon>Pterygota</taxon>
        <taxon>Neoptera</taxon>
        <taxon>Endopterygota</taxon>
        <taxon>Diptera</taxon>
        <taxon>Brachycera</taxon>
        <taxon>Muscomorpha</taxon>
        <taxon>Ephydroidea</taxon>
        <taxon>Drosophilidae</taxon>
        <taxon>Drosophila</taxon>
        <taxon>Sophophora</taxon>
    </lineage>
</organism>
<comment type="function">
    <text evidence="1 2">Activates phosphatidylinositol 3-kinase when bound to the regulatory p85 subunit. May mediate the control of various cellular processes by insulin-like peptides. When phosphorylated by the insulin receptor binds specifically to various cellular proteins containing SH2 domains. Involved in control of cell proliferation, cell size, and body and organ growth throughout development. Also has a role in a signaling pathway controlling the physiological response required to endure periods of low nutrient conditions. Insulin/insulin-like growth factor (IGF) signaling pathway has a role in regulating aging and is necessary in the ovary for vitellogenic maturation (By similarity).</text>
</comment>
<comment type="subunit">
    <text evidence="2">Bindings to phosphatidylinositol 3-kinase and SHP2.</text>
</comment>